<sequence length="906" mass="100393">MCRKEPFLLPTALCILAALVLHQGPVEALGGSRLCKTGFLEDVYHASVYRSVHEGQPLLNVKFTDCGADRRIHYETSNPTDFRIDGDGIVCASRTFDISPEQAEFLVYAQDEDTRELWHVTVKITLRPRHVQDLHQGFHKVREIKFSTQRKHNGLQRQKRDWVIPPINVPENARGTFPQELVGIRSDRDKSLSLRYSVTGPGADQPPLGVFIINPISGQLSVTKPLDREQIATFHLRAHAVDVNGNQVENPIDIVINVIDMNDNRPEFLHQIWNGTIPEGSKPGTYVMTVTAIDGDDPKQPNGMLRYKILSQTPASSSPNMFTINNETGDIITLAAGLDREKVQRYTLIIQATDMEGNPTYGLSNTATAVIAVTDVNDNPPEFTAMTFYGEVPENRVDVVVANLTVTDKDQPHTPAWNAVYRIVGGDGTGRFAIKTDANSNDGLVTVVKPIDYETKSTYILTVVAENQVELIRGIQYKPESTATVSVTIIDVNENPYFTPNPKLIRQEEGLFAGKLLTTFSAQDPDRYMQQTIRYSKLSDPANWLKIDPVNGFITTTAVLDRESIYVKNNMYNATFLATDSGIPPMSGTGTLQIYLLDINDNAPYVYPQEVEICDRPDPNAINITALDADINPNAGPFIFELPYSPMDIKKNWTVTRLSGDHAQLSLKIGSLDYGIYNIPIQITDSGNPAMSNTSYLRVKVCSCEHGYCSTTAPIIGTGLGTGAIIAILLCIIILLTLVLMFVVWMKRRDKERQAKQLLIDPEDDVRDNILKYDEEGGGEEDQDYDLSQLQQPDTVEPDTIKPVGIRRMDERPIHAEPQYPIRSAAPHPGDIGDFINEGLKAADNDPTAPPYDSLLVFDYEGSGSTAGSLSSLNSSSSGGEQDYDYLNDWGPRFKKLADMYGGSDD</sequence>
<reference key="1">
    <citation type="journal article" date="1991" name="Development">
        <title>Expression of a novel cadherin (EP-cadherin) in unfertilized eggs and early Xenopus embryos.</title>
        <authorList>
            <person name="Ginsberg D."/>
            <person name="Desimone D."/>
            <person name="Geiger B."/>
        </authorList>
    </citation>
    <scope>NUCLEOTIDE SEQUENCE [MRNA]</scope>
</reference>
<organism>
    <name type="scientific">Xenopus laevis</name>
    <name type="common">African clawed frog</name>
    <dbReference type="NCBI Taxonomy" id="8355"/>
    <lineage>
        <taxon>Eukaryota</taxon>
        <taxon>Metazoa</taxon>
        <taxon>Chordata</taxon>
        <taxon>Craniata</taxon>
        <taxon>Vertebrata</taxon>
        <taxon>Euteleostomi</taxon>
        <taxon>Amphibia</taxon>
        <taxon>Batrachia</taxon>
        <taxon>Anura</taxon>
        <taxon>Pipoidea</taxon>
        <taxon>Pipidae</taxon>
        <taxon>Xenopodinae</taxon>
        <taxon>Xenopus</taxon>
        <taxon>Xenopus</taxon>
    </lineage>
</organism>
<comment type="function">
    <text evidence="1 3">Calcium-dependent cell adhesion protein; preferentially mediates homotypic cell-cell adhesion. Cadherins may thus contribute to the sorting of heterogeneous cell types, and thereby play an important role during embryonic development. Required for proper neurite branching. Required for pre- and postsynaptic organization (By similarity).</text>
</comment>
<comment type="subunit">
    <text evidence="2">Homodimer (via extracellular region). Can also form heterodimers with other cadherins (via extracellular region). Dimerization occurs in trans, i.e. with a cadherin chain from another cell.</text>
</comment>
<comment type="subcellular location">
    <subcellularLocation>
        <location evidence="2">Cell membrane</location>
        <topology evidence="4">Single-pass type I membrane protein</topology>
    </subcellularLocation>
    <subcellularLocation>
        <location evidence="2">Cell membrane</location>
        <location evidence="2">Sarcolemma</location>
    </subcellularLocation>
    <subcellularLocation>
        <location evidence="2">Cell junction</location>
    </subcellularLocation>
    <subcellularLocation>
        <location evidence="2">Cell surface</location>
    </subcellularLocation>
    <subcellularLocation>
        <location evidence="2">Cell junction</location>
        <location evidence="2">Desmosome</location>
    </subcellularLocation>
    <subcellularLocation>
        <location evidence="2">Cell junction</location>
        <location evidence="2">Adherens junction</location>
    </subcellularLocation>
</comment>
<comment type="domain">
    <text evidence="2">Three calcium ions are usually bound at the interface of each cadherin domain and rigidify the connections, imparting a strong curvature to the full-length ectodomain. Calcium-binding sites are occupied sequentially in the order of site 3, then site 2 and site 1.</text>
</comment>
<accession>P33147</accession>
<protein>
    <recommendedName>
        <fullName>Cadherin-2A</fullName>
    </recommendedName>
    <alternativeName>
        <fullName>Neural cadherin A</fullName>
        <shortName>N-cadherin A</shortName>
    </alternativeName>
    <alternativeName>
        <fullName>Neural cadherin-2</fullName>
        <shortName>N-cadherin-2</shortName>
    </alternativeName>
</protein>
<keyword id="KW-0106">Calcium</keyword>
<keyword id="KW-0130">Cell adhesion</keyword>
<keyword id="KW-0965">Cell junction</keyword>
<keyword id="KW-1003">Cell membrane</keyword>
<keyword id="KW-0165">Cleavage on pair of basic residues</keyword>
<keyword id="KW-0325">Glycoprotein</keyword>
<keyword id="KW-0472">Membrane</keyword>
<keyword id="KW-0479">Metal-binding</keyword>
<keyword id="KW-1185">Reference proteome</keyword>
<keyword id="KW-0677">Repeat</keyword>
<keyword id="KW-0732">Signal</keyword>
<keyword id="KW-0812">Transmembrane</keyword>
<keyword id="KW-1133">Transmembrane helix</keyword>
<evidence type="ECO:0000250" key="1">
    <source>
        <dbReference type="UniProtKB" id="P10288"/>
    </source>
</evidence>
<evidence type="ECO:0000250" key="2">
    <source>
        <dbReference type="UniProtKB" id="P15116"/>
    </source>
</evidence>
<evidence type="ECO:0000250" key="3">
    <source>
        <dbReference type="UniProtKB" id="P20310"/>
    </source>
</evidence>
<evidence type="ECO:0000255" key="4"/>
<evidence type="ECO:0000255" key="5">
    <source>
        <dbReference type="PROSITE-ProRule" id="PRU00043"/>
    </source>
</evidence>
<evidence type="ECO:0000256" key="6">
    <source>
        <dbReference type="SAM" id="MobiDB-lite"/>
    </source>
</evidence>
<name>CAD2A_XENLA</name>
<gene>
    <name type="primary">cdh2-a</name>
    <name type="synonym">cdh2</name>
</gene>
<feature type="signal peptide" evidence="4">
    <location>
        <begin position="1"/>
        <end position="28"/>
    </location>
</feature>
<feature type="propeptide" id="PRO_0000003743" evidence="4">
    <location>
        <begin position="29"/>
        <end position="160"/>
    </location>
</feature>
<feature type="chain" id="PRO_0000003744" description="Cadherin-2A">
    <location>
        <begin position="161"/>
        <end position="906"/>
    </location>
</feature>
<feature type="topological domain" description="Extracellular" evidence="4">
    <location>
        <begin position="161"/>
        <end position="724"/>
    </location>
</feature>
<feature type="transmembrane region" description="Helical" evidence="4">
    <location>
        <begin position="725"/>
        <end position="746"/>
    </location>
</feature>
<feature type="topological domain" description="Cytoplasmic" evidence="4">
    <location>
        <begin position="747"/>
        <end position="906"/>
    </location>
</feature>
<feature type="domain" description="Cadherin 1" evidence="5">
    <location>
        <begin position="161"/>
        <end position="268"/>
    </location>
</feature>
<feature type="domain" description="Cadherin 2" evidence="5">
    <location>
        <begin position="269"/>
        <end position="383"/>
    </location>
</feature>
<feature type="domain" description="Cadherin 3" evidence="5">
    <location>
        <begin position="384"/>
        <end position="498"/>
    </location>
</feature>
<feature type="domain" description="Cadherin 4" evidence="5">
    <location>
        <begin position="499"/>
        <end position="604"/>
    </location>
</feature>
<feature type="domain" description="Cadherin 5" evidence="5">
    <location>
        <begin position="605"/>
        <end position="714"/>
    </location>
</feature>
<feature type="region of interest" description="Disordered" evidence="6">
    <location>
        <begin position="775"/>
        <end position="800"/>
    </location>
</feature>
<feature type="region of interest" description="Disordered" evidence="6">
    <location>
        <begin position="863"/>
        <end position="884"/>
    </location>
</feature>
<feature type="compositionally biased region" description="Acidic residues" evidence="6">
    <location>
        <begin position="776"/>
        <end position="785"/>
    </location>
</feature>
<feature type="compositionally biased region" description="Low complexity" evidence="6">
    <location>
        <begin position="863"/>
        <end position="880"/>
    </location>
</feature>
<feature type="binding site" evidence="2">
    <location>
        <position position="171"/>
    </location>
    <ligand>
        <name>Ca(2+)</name>
        <dbReference type="ChEBI" id="CHEBI:29108"/>
        <label>1</label>
    </ligand>
</feature>
<feature type="binding site" evidence="2">
    <location>
        <position position="171"/>
    </location>
    <ligand>
        <name>Ca(2+)</name>
        <dbReference type="ChEBI" id="CHEBI:29108"/>
        <label>2</label>
    </ligand>
</feature>
<feature type="binding site" evidence="2">
    <location>
        <position position="227"/>
    </location>
    <ligand>
        <name>Ca(2+)</name>
        <dbReference type="ChEBI" id="CHEBI:29108"/>
        <label>1</label>
    </ligand>
</feature>
<feature type="binding site" evidence="2">
    <location>
        <position position="229"/>
    </location>
    <ligand>
        <name>Ca(2+)</name>
        <dbReference type="ChEBI" id="CHEBI:29108"/>
        <label>1</label>
    </ligand>
</feature>
<feature type="binding site" evidence="2">
    <location>
        <position position="229"/>
    </location>
    <ligand>
        <name>Ca(2+)</name>
        <dbReference type="ChEBI" id="CHEBI:29108"/>
        <label>2</label>
    </ligand>
</feature>
<feature type="binding site" evidence="2">
    <location>
        <position position="260"/>
    </location>
    <ligand>
        <name>Ca(2+)</name>
        <dbReference type="ChEBI" id="CHEBI:29108"/>
        <label>2</label>
    </ligand>
</feature>
<feature type="binding site" evidence="2">
    <location>
        <position position="261"/>
    </location>
    <ligand>
        <name>Ca(2+)</name>
        <dbReference type="ChEBI" id="CHEBI:29108"/>
        <label>2</label>
    </ligand>
</feature>
<feature type="binding site" evidence="2">
    <location>
        <position position="262"/>
    </location>
    <ligand>
        <name>Ca(2+)</name>
        <dbReference type="ChEBI" id="CHEBI:29108"/>
        <label>3</label>
    </ligand>
</feature>
<feature type="binding site" evidence="2">
    <location>
        <position position="263"/>
    </location>
    <ligand>
        <name>Ca(2+)</name>
        <dbReference type="ChEBI" id="CHEBI:29108"/>
        <label>1</label>
    </ligand>
</feature>
<feature type="binding site" evidence="2">
    <location>
        <position position="263"/>
    </location>
    <ligand>
        <name>Ca(2+)</name>
        <dbReference type="ChEBI" id="CHEBI:29108"/>
        <label>2</label>
    </ligand>
</feature>
<feature type="binding site" evidence="2">
    <location>
        <position position="264"/>
    </location>
    <ligand>
        <name>Ca(2+)</name>
        <dbReference type="ChEBI" id="CHEBI:29108"/>
        <label>3</label>
    </ligand>
</feature>
<feature type="binding site" evidence="2">
    <location>
        <position position="294"/>
    </location>
    <ligand>
        <name>Ca(2+)</name>
        <dbReference type="ChEBI" id="CHEBI:29108"/>
        <label>3</label>
    </ligand>
</feature>
<feature type="binding site" evidence="2">
    <location>
        <position position="296"/>
    </location>
    <ligand>
        <name>Ca(2+)</name>
        <dbReference type="ChEBI" id="CHEBI:29108"/>
        <label>2</label>
    </ligand>
</feature>
<feature type="binding site" evidence="2">
    <location>
        <position position="302"/>
    </location>
    <ligand>
        <name>Ca(2+)</name>
        <dbReference type="ChEBI" id="CHEBI:29108"/>
        <label>3</label>
    </ligand>
</feature>
<feature type="binding site" evidence="2">
    <location>
        <position position="354"/>
    </location>
    <ligand>
        <name>Ca(2+)</name>
        <dbReference type="ChEBI" id="CHEBI:29108"/>
        <label>3</label>
    </ligand>
</feature>
<feature type="glycosylation site" description="N-linked (GlcNAc...) asparagine" evidence="4">
    <location>
        <position position="274"/>
    </location>
</feature>
<feature type="glycosylation site" description="N-linked (GlcNAc...) asparagine" evidence="4">
    <location>
        <position position="326"/>
    </location>
</feature>
<feature type="glycosylation site" description="N-linked (GlcNAc...) asparagine" evidence="4">
    <location>
        <position position="403"/>
    </location>
</feature>
<feature type="glycosylation site" description="N-linked (GlcNAc...) asparagine" evidence="4">
    <location>
        <position position="573"/>
    </location>
</feature>
<feature type="glycosylation site" description="N-linked (GlcNAc...) asparagine" evidence="4">
    <location>
        <position position="623"/>
    </location>
</feature>
<feature type="glycosylation site" description="N-linked (GlcNAc...) asparagine" evidence="4">
    <location>
        <position position="652"/>
    </location>
</feature>
<feature type="glycosylation site" description="N-linked (GlcNAc...) asparagine" evidence="4">
    <location>
        <position position="693"/>
    </location>
</feature>
<dbReference type="EMBL" id="X57675">
    <property type="protein sequence ID" value="CAA40867.1"/>
    <property type="molecule type" value="mRNA"/>
</dbReference>
<dbReference type="PIR" id="A43785">
    <property type="entry name" value="IJXLC2"/>
</dbReference>
<dbReference type="RefSeq" id="NP_001165707.1">
    <property type="nucleotide sequence ID" value="NM_001172236.1"/>
</dbReference>
<dbReference type="SMR" id="P33147"/>
<dbReference type="GlyCosmos" id="P33147">
    <property type="glycosylation" value="7 sites, No reported glycans"/>
</dbReference>
<dbReference type="GeneID" id="378518"/>
<dbReference type="KEGG" id="xla:378518"/>
<dbReference type="AGR" id="Xenbase:XB-GENE-6252662"/>
<dbReference type="CTD" id="378518"/>
<dbReference type="Xenbase" id="XB-GENE-6252662">
    <property type="gene designation" value="cdh2.L"/>
</dbReference>
<dbReference type="OrthoDB" id="6079678at2759"/>
<dbReference type="Proteomes" id="UP000186698">
    <property type="component" value="Chromosome 6L"/>
</dbReference>
<dbReference type="Bgee" id="378518">
    <property type="expression patterns" value="Expressed in heart and 16 other cell types or tissues"/>
</dbReference>
<dbReference type="GO" id="GO:0005912">
    <property type="term" value="C:adherens junction"/>
    <property type="evidence" value="ECO:0000250"/>
    <property type="project" value="UniProtKB"/>
</dbReference>
<dbReference type="GO" id="GO:0045177">
    <property type="term" value="C:apical part of cell"/>
    <property type="evidence" value="ECO:0000318"/>
    <property type="project" value="GO_Central"/>
</dbReference>
<dbReference type="GO" id="GO:0016342">
    <property type="term" value="C:catenin complex"/>
    <property type="evidence" value="ECO:0000318"/>
    <property type="project" value="GO_Central"/>
</dbReference>
<dbReference type="GO" id="GO:0009986">
    <property type="term" value="C:cell surface"/>
    <property type="evidence" value="ECO:0007669"/>
    <property type="project" value="UniProtKB-SubCell"/>
</dbReference>
<dbReference type="GO" id="GO:0005911">
    <property type="term" value="C:cell-cell junction"/>
    <property type="evidence" value="ECO:0000250"/>
    <property type="project" value="UniProtKB"/>
</dbReference>
<dbReference type="GO" id="GO:0005737">
    <property type="term" value="C:cytoplasm"/>
    <property type="evidence" value="ECO:0000318"/>
    <property type="project" value="GO_Central"/>
</dbReference>
<dbReference type="GO" id="GO:0030057">
    <property type="term" value="C:desmosome"/>
    <property type="evidence" value="ECO:0000250"/>
    <property type="project" value="UniProtKB"/>
</dbReference>
<dbReference type="GO" id="GO:0014704">
    <property type="term" value="C:intercalated disc"/>
    <property type="evidence" value="ECO:0000250"/>
    <property type="project" value="UniProtKB"/>
</dbReference>
<dbReference type="GO" id="GO:0030027">
    <property type="term" value="C:lamellipodium"/>
    <property type="evidence" value="ECO:0000318"/>
    <property type="project" value="GO_Central"/>
</dbReference>
<dbReference type="GO" id="GO:0043005">
    <property type="term" value="C:neuron projection"/>
    <property type="evidence" value="ECO:0000318"/>
    <property type="project" value="GO_Central"/>
</dbReference>
<dbReference type="GO" id="GO:0005886">
    <property type="term" value="C:plasma membrane"/>
    <property type="evidence" value="ECO:0000250"/>
    <property type="project" value="UniProtKB"/>
</dbReference>
<dbReference type="GO" id="GO:0014069">
    <property type="term" value="C:postsynaptic density"/>
    <property type="evidence" value="ECO:0007669"/>
    <property type="project" value="TreeGrafter"/>
</dbReference>
<dbReference type="GO" id="GO:0099634">
    <property type="term" value="C:postsynaptic specialization membrane"/>
    <property type="evidence" value="ECO:0007669"/>
    <property type="project" value="TreeGrafter"/>
</dbReference>
<dbReference type="GO" id="GO:0048787">
    <property type="term" value="C:presynaptic active zone membrane"/>
    <property type="evidence" value="ECO:0007669"/>
    <property type="project" value="TreeGrafter"/>
</dbReference>
<dbReference type="GO" id="GO:0042383">
    <property type="term" value="C:sarcolemma"/>
    <property type="evidence" value="ECO:0007669"/>
    <property type="project" value="UniProtKB-SubCell"/>
</dbReference>
<dbReference type="GO" id="GO:0008013">
    <property type="term" value="F:beta-catenin binding"/>
    <property type="evidence" value="ECO:0000318"/>
    <property type="project" value="GO_Central"/>
</dbReference>
<dbReference type="GO" id="GO:0045296">
    <property type="term" value="F:cadherin binding"/>
    <property type="evidence" value="ECO:0000318"/>
    <property type="project" value="GO_Central"/>
</dbReference>
<dbReference type="GO" id="GO:0005509">
    <property type="term" value="F:calcium ion binding"/>
    <property type="evidence" value="ECO:0000250"/>
    <property type="project" value="UniProtKB"/>
</dbReference>
<dbReference type="GO" id="GO:0034332">
    <property type="term" value="P:adherens junction organization"/>
    <property type="evidence" value="ECO:0000318"/>
    <property type="project" value="GO_Central"/>
</dbReference>
<dbReference type="GO" id="GO:0016339">
    <property type="term" value="P:calcium-dependent cell-cell adhesion via plasma membrane cell adhesion molecules"/>
    <property type="evidence" value="ECO:0000318"/>
    <property type="project" value="GO_Central"/>
</dbReference>
<dbReference type="GO" id="GO:0016477">
    <property type="term" value="P:cell migration"/>
    <property type="evidence" value="ECO:0000318"/>
    <property type="project" value="GO_Central"/>
</dbReference>
<dbReference type="GO" id="GO:0000902">
    <property type="term" value="P:cell morphogenesis"/>
    <property type="evidence" value="ECO:0000318"/>
    <property type="project" value="GO_Central"/>
</dbReference>
<dbReference type="GO" id="GO:0098609">
    <property type="term" value="P:cell-cell adhesion"/>
    <property type="evidence" value="ECO:0000250"/>
    <property type="project" value="UniProtKB"/>
</dbReference>
<dbReference type="GO" id="GO:0044331">
    <property type="term" value="P:cell-cell adhesion mediated by cadherin"/>
    <property type="evidence" value="ECO:0000250"/>
    <property type="project" value="UniProtKB"/>
</dbReference>
<dbReference type="GO" id="GO:0007043">
    <property type="term" value="P:cell-cell junction assembly"/>
    <property type="evidence" value="ECO:0000318"/>
    <property type="project" value="GO_Central"/>
</dbReference>
<dbReference type="GO" id="GO:0010001">
    <property type="term" value="P:glial cell differentiation"/>
    <property type="evidence" value="ECO:0000250"/>
    <property type="project" value="UniProtKB"/>
</dbReference>
<dbReference type="GO" id="GO:0007156">
    <property type="term" value="P:homophilic cell adhesion via plasma membrane adhesion molecules"/>
    <property type="evidence" value="ECO:0007669"/>
    <property type="project" value="InterPro"/>
</dbReference>
<dbReference type="GO" id="GO:0097150">
    <property type="term" value="P:neuronal stem cell population maintenance"/>
    <property type="evidence" value="ECO:0000250"/>
    <property type="project" value="UniProtKB"/>
</dbReference>
<dbReference type="GO" id="GO:0007416">
    <property type="term" value="P:synapse assembly"/>
    <property type="evidence" value="ECO:0000318"/>
    <property type="project" value="GO_Central"/>
</dbReference>
<dbReference type="CDD" id="cd11304">
    <property type="entry name" value="Cadherin_repeat"/>
    <property type="match status" value="4"/>
</dbReference>
<dbReference type="FunFam" id="2.60.40.60:FF:000011">
    <property type="entry name" value="Cadherin 1"/>
    <property type="match status" value="1"/>
</dbReference>
<dbReference type="FunFam" id="2.60.40.60:FF:000019">
    <property type="entry name" value="Cadherin 2"/>
    <property type="match status" value="1"/>
</dbReference>
<dbReference type="FunFam" id="2.60.40.60:FF:000022">
    <property type="entry name" value="Cadherin 2"/>
    <property type="match status" value="1"/>
</dbReference>
<dbReference type="FunFam" id="2.60.40.60:FF:000027">
    <property type="entry name" value="Cadherin 2"/>
    <property type="match status" value="1"/>
</dbReference>
<dbReference type="FunFam" id="2.60.40.60:FF:000045">
    <property type="entry name" value="Cadherin 2"/>
    <property type="match status" value="1"/>
</dbReference>
<dbReference type="FunFam" id="2.60.40.60:FF:000462">
    <property type="entry name" value="Cadherin 2"/>
    <property type="match status" value="1"/>
</dbReference>
<dbReference type="FunFam" id="4.10.900.10:FF:000001">
    <property type="entry name" value="Cadherin 2"/>
    <property type="match status" value="1"/>
</dbReference>
<dbReference type="Gene3D" id="2.60.40.60">
    <property type="entry name" value="Cadherins"/>
    <property type="match status" value="6"/>
</dbReference>
<dbReference type="Gene3D" id="4.10.900.10">
    <property type="entry name" value="TCF3-CBD (Catenin binding domain)"/>
    <property type="match status" value="1"/>
</dbReference>
<dbReference type="InterPro" id="IPR039808">
    <property type="entry name" value="Cadherin"/>
</dbReference>
<dbReference type="InterPro" id="IPR002126">
    <property type="entry name" value="Cadherin-like_dom"/>
</dbReference>
<dbReference type="InterPro" id="IPR015919">
    <property type="entry name" value="Cadherin-like_sf"/>
</dbReference>
<dbReference type="InterPro" id="IPR020894">
    <property type="entry name" value="Cadherin_CS"/>
</dbReference>
<dbReference type="InterPro" id="IPR014868">
    <property type="entry name" value="Cadherin_pro_dom"/>
</dbReference>
<dbReference type="InterPro" id="IPR000233">
    <property type="entry name" value="Cadherin_Y-type_LIR"/>
</dbReference>
<dbReference type="InterPro" id="IPR027397">
    <property type="entry name" value="Catenin-bd_sf"/>
</dbReference>
<dbReference type="PANTHER" id="PTHR24027:SF79">
    <property type="entry name" value="CADHERIN-2"/>
    <property type="match status" value="1"/>
</dbReference>
<dbReference type="PANTHER" id="PTHR24027">
    <property type="entry name" value="CADHERIN-23"/>
    <property type="match status" value="1"/>
</dbReference>
<dbReference type="Pfam" id="PF01049">
    <property type="entry name" value="CADH_Y-type_LIR"/>
    <property type="match status" value="1"/>
</dbReference>
<dbReference type="Pfam" id="PF00028">
    <property type="entry name" value="Cadherin"/>
    <property type="match status" value="5"/>
</dbReference>
<dbReference type="Pfam" id="PF08758">
    <property type="entry name" value="Cadherin_pro"/>
    <property type="match status" value="1"/>
</dbReference>
<dbReference type="PRINTS" id="PR00205">
    <property type="entry name" value="CADHERIN"/>
</dbReference>
<dbReference type="SMART" id="SM00112">
    <property type="entry name" value="CA"/>
    <property type="match status" value="5"/>
</dbReference>
<dbReference type="SMART" id="SM01055">
    <property type="entry name" value="Cadherin_pro"/>
    <property type="match status" value="1"/>
</dbReference>
<dbReference type="SUPFAM" id="SSF49313">
    <property type="entry name" value="Cadherin-like"/>
    <property type="match status" value="6"/>
</dbReference>
<dbReference type="PROSITE" id="PS00232">
    <property type="entry name" value="CADHERIN_1"/>
    <property type="match status" value="3"/>
</dbReference>
<dbReference type="PROSITE" id="PS50268">
    <property type="entry name" value="CADHERIN_2"/>
    <property type="match status" value="5"/>
</dbReference>
<proteinExistence type="evidence at transcript level"/>